<gene>
    <name evidence="1" type="primary">ruvB</name>
    <name type="ordered locus">Ccon26_13820</name>
    <name type="ORF">CCC13826_0384</name>
</gene>
<protein>
    <recommendedName>
        <fullName evidence="1">Holliday junction branch migration complex subunit RuvB</fullName>
        <ecNumber evidence="1">3.6.4.-</ecNumber>
    </recommendedName>
</protein>
<proteinExistence type="inferred from homology"/>
<comment type="function">
    <text evidence="1">The RuvA-RuvB-RuvC complex processes Holliday junction (HJ) DNA during genetic recombination and DNA repair, while the RuvA-RuvB complex plays an important role in the rescue of blocked DNA replication forks via replication fork reversal (RFR). RuvA specifically binds to HJ cruciform DNA, conferring on it an open structure. The RuvB hexamer acts as an ATP-dependent pump, pulling dsDNA into and through the RuvAB complex. RuvB forms 2 homohexamers on either side of HJ DNA bound by 1 or 2 RuvA tetramers; 4 subunits per hexamer contact DNA at a time. Coordinated motions by a converter formed by DNA-disengaged RuvB subunits stimulates ATP hydrolysis and nucleotide exchange. Immobilization of the converter enables RuvB to convert the ATP-contained energy into a lever motion, pulling 2 nucleotides of DNA out of the RuvA tetramer per ATP hydrolyzed, thus driving DNA branch migration. The RuvB motors rotate together with the DNA substrate, which together with the progressing nucleotide cycle form the mechanistic basis for DNA recombination by continuous HJ branch migration. Branch migration allows RuvC to scan DNA until it finds its consensus sequence, where it cleaves and resolves cruciform DNA.</text>
</comment>
<comment type="catalytic activity">
    <reaction evidence="1">
        <text>ATP + H2O = ADP + phosphate + H(+)</text>
        <dbReference type="Rhea" id="RHEA:13065"/>
        <dbReference type="ChEBI" id="CHEBI:15377"/>
        <dbReference type="ChEBI" id="CHEBI:15378"/>
        <dbReference type="ChEBI" id="CHEBI:30616"/>
        <dbReference type="ChEBI" id="CHEBI:43474"/>
        <dbReference type="ChEBI" id="CHEBI:456216"/>
    </reaction>
</comment>
<comment type="subunit">
    <text evidence="1">Homohexamer. Forms an RuvA(8)-RuvB(12)-Holliday junction (HJ) complex. HJ DNA is sandwiched between 2 RuvA tetramers; dsDNA enters through RuvA and exits via RuvB. An RuvB hexamer assembles on each DNA strand where it exits the tetramer. Each RuvB hexamer is contacted by two RuvA subunits (via domain III) on 2 adjacent RuvB subunits; this complex drives branch migration. In the full resolvosome a probable DNA-RuvA(4)-RuvB(12)-RuvC(2) complex forms which resolves the HJ.</text>
</comment>
<comment type="subcellular location">
    <subcellularLocation>
        <location evidence="1">Cytoplasm</location>
    </subcellularLocation>
</comment>
<comment type="domain">
    <text evidence="1">Has 3 domains, the large (RuvB-L) and small ATPase (RuvB-S) domains and the C-terminal head (RuvB-H) domain. The head domain binds DNA, while the ATPase domains jointly bind ATP, ADP or are empty depending on the state of the subunit in the translocation cycle. During a single DNA translocation step the structure of each domain remains the same, but their relative positions change.</text>
</comment>
<comment type="similarity">
    <text evidence="1">Belongs to the RuvB family.</text>
</comment>
<evidence type="ECO:0000255" key="1">
    <source>
        <dbReference type="HAMAP-Rule" id="MF_00016"/>
    </source>
</evidence>
<feature type="chain" id="PRO_1000001379" description="Holliday junction branch migration complex subunit RuvB">
    <location>
        <begin position="1"/>
        <end position="336"/>
    </location>
</feature>
<feature type="region of interest" description="Large ATPase domain (RuvB-L)" evidence="1">
    <location>
        <begin position="1"/>
        <end position="181"/>
    </location>
</feature>
<feature type="region of interest" description="Small ATPAse domain (RuvB-S)" evidence="1">
    <location>
        <begin position="182"/>
        <end position="252"/>
    </location>
</feature>
<feature type="region of interest" description="Head domain (RuvB-H)" evidence="1">
    <location>
        <begin position="255"/>
        <end position="336"/>
    </location>
</feature>
<feature type="binding site" evidence="1">
    <location>
        <position position="20"/>
    </location>
    <ligand>
        <name>ATP</name>
        <dbReference type="ChEBI" id="CHEBI:30616"/>
    </ligand>
</feature>
<feature type="binding site" evidence="1">
    <location>
        <position position="21"/>
    </location>
    <ligand>
        <name>ATP</name>
        <dbReference type="ChEBI" id="CHEBI:30616"/>
    </ligand>
</feature>
<feature type="binding site" evidence="1">
    <location>
        <position position="62"/>
    </location>
    <ligand>
        <name>ATP</name>
        <dbReference type="ChEBI" id="CHEBI:30616"/>
    </ligand>
</feature>
<feature type="binding site" evidence="1">
    <location>
        <position position="65"/>
    </location>
    <ligand>
        <name>ATP</name>
        <dbReference type="ChEBI" id="CHEBI:30616"/>
    </ligand>
</feature>
<feature type="binding site" evidence="1">
    <location>
        <position position="66"/>
    </location>
    <ligand>
        <name>ATP</name>
        <dbReference type="ChEBI" id="CHEBI:30616"/>
    </ligand>
</feature>
<feature type="binding site" evidence="1">
    <location>
        <position position="66"/>
    </location>
    <ligand>
        <name>Mg(2+)</name>
        <dbReference type="ChEBI" id="CHEBI:18420"/>
    </ligand>
</feature>
<feature type="binding site" evidence="1">
    <location>
        <position position="67"/>
    </location>
    <ligand>
        <name>ATP</name>
        <dbReference type="ChEBI" id="CHEBI:30616"/>
    </ligand>
</feature>
<feature type="binding site" evidence="1">
    <location>
        <begin position="128"/>
        <end position="130"/>
    </location>
    <ligand>
        <name>ATP</name>
        <dbReference type="ChEBI" id="CHEBI:30616"/>
    </ligand>
</feature>
<feature type="binding site" evidence="1">
    <location>
        <position position="171"/>
    </location>
    <ligand>
        <name>ATP</name>
        <dbReference type="ChEBI" id="CHEBI:30616"/>
    </ligand>
</feature>
<feature type="binding site" evidence="1">
    <location>
        <position position="181"/>
    </location>
    <ligand>
        <name>ATP</name>
        <dbReference type="ChEBI" id="CHEBI:30616"/>
    </ligand>
</feature>
<feature type="binding site" evidence="1">
    <location>
        <position position="218"/>
    </location>
    <ligand>
        <name>ATP</name>
        <dbReference type="ChEBI" id="CHEBI:30616"/>
    </ligand>
</feature>
<feature type="binding site" evidence="1">
    <location>
        <position position="309"/>
    </location>
    <ligand>
        <name>DNA</name>
        <dbReference type="ChEBI" id="CHEBI:16991"/>
    </ligand>
</feature>
<feature type="binding site" evidence="1">
    <location>
        <position position="314"/>
    </location>
    <ligand>
        <name>DNA</name>
        <dbReference type="ChEBI" id="CHEBI:16991"/>
    </ligand>
</feature>
<name>RUVB_CAMC1</name>
<reference key="1">
    <citation type="submission" date="2007-10" db="EMBL/GenBank/DDBJ databases">
        <title>Genome sequence of Campylobacter concisus 13826 isolated from human feces.</title>
        <authorList>
            <person name="Fouts D.E."/>
            <person name="Mongodin E.F."/>
            <person name="Puiu D."/>
            <person name="Sebastian Y."/>
            <person name="Miller W.G."/>
            <person name="Mandrell R.E."/>
            <person name="On S."/>
            <person name="Nelson K.E."/>
        </authorList>
    </citation>
    <scope>NUCLEOTIDE SEQUENCE [LARGE SCALE GENOMIC DNA]</scope>
    <source>
        <strain>13826</strain>
    </source>
</reference>
<dbReference type="EC" id="3.6.4.-" evidence="1"/>
<dbReference type="EMBL" id="CP000792">
    <property type="protein sequence ID" value="EAT99259.1"/>
    <property type="molecule type" value="Genomic_DNA"/>
</dbReference>
<dbReference type="RefSeq" id="WP_012140129.1">
    <property type="nucleotide sequence ID" value="NC_009802.2"/>
</dbReference>
<dbReference type="SMR" id="A7ZEM1"/>
<dbReference type="STRING" id="360104.CCC13826_0384"/>
<dbReference type="KEGG" id="cco:CCC13826_0384"/>
<dbReference type="eggNOG" id="COG2255">
    <property type="taxonomic scope" value="Bacteria"/>
</dbReference>
<dbReference type="HOGENOM" id="CLU_055599_1_0_7"/>
<dbReference type="OrthoDB" id="9804478at2"/>
<dbReference type="Proteomes" id="UP000001121">
    <property type="component" value="Chromosome"/>
</dbReference>
<dbReference type="GO" id="GO:0005737">
    <property type="term" value="C:cytoplasm"/>
    <property type="evidence" value="ECO:0007669"/>
    <property type="project" value="UniProtKB-SubCell"/>
</dbReference>
<dbReference type="GO" id="GO:0048476">
    <property type="term" value="C:Holliday junction resolvase complex"/>
    <property type="evidence" value="ECO:0007669"/>
    <property type="project" value="UniProtKB-UniRule"/>
</dbReference>
<dbReference type="GO" id="GO:0005524">
    <property type="term" value="F:ATP binding"/>
    <property type="evidence" value="ECO:0007669"/>
    <property type="project" value="UniProtKB-UniRule"/>
</dbReference>
<dbReference type="GO" id="GO:0016887">
    <property type="term" value="F:ATP hydrolysis activity"/>
    <property type="evidence" value="ECO:0007669"/>
    <property type="project" value="InterPro"/>
</dbReference>
<dbReference type="GO" id="GO:0000400">
    <property type="term" value="F:four-way junction DNA binding"/>
    <property type="evidence" value="ECO:0007669"/>
    <property type="project" value="UniProtKB-UniRule"/>
</dbReference>
<dbReference type="GO" id="GO:0009378">
    <property type="term" value="F:four-way junction helicase activity"/>
    <property type="evidence" value="ECO:0007669"/>
    <property type="project" value="InterPro"/>
</dbReference>
<dbReference type="GO" id="GO:0006310">
    <property type="term" value="P:DNA recombination"/>
    <property type="evidence" value="ECO:0007669"/>
    <property type="project" value="UniProtKB-UniRule"/>
</dbReference>
<dbReference type="GO" id="GO:0006281">
    <property type="term" value="P:DNA repair"/>
    <property type="evidence" value="ECO:0007669"/>
    <property type="project" value="UniProtKB-UniRule"/>
</dbReference>
<dbReference type="CDD" id="cd00009">
    <property type="entry name" value="AAA"/>
    <property type="match status" value="1"/>
</dbReference>
<dbReference type="Gene3D" id="1.10.8.60">
    <property type="match status" value="1"/>
</dbReference>
<dbReference type="Gene3D" id="3.40.50.300">
    <property type="entry name" value="P-loop containing nucleotide triphosphate hydrolases"/>
    <property type="match status" value="1"/>
</dbReference>
<dbReference type="Gene3D" id="1.10.10.10">
    <property type="entry name" value="Winged helix-like DNA-binding domain superfamily/Winged helix DNA-binding domain"/>
    <property type="match status" value="1"/>
</dbReference>
<dbReference type="HAMAP" id="MF_00016">
    <property type="entry name" value="DNA_HJ_migration_RuvB"/>
    <property type="match status" value="1"/>
</dbReference>
<dbReference type="InterPro" id="IPR003593">
    <property type="entry name" value="AAA+_ATPase"/>
</dbReference>
<dbReference type="InterPro" id="IPR041445">
    <property type="entry name" value="AAA_lid_4"/>
</dbReference>
<dbReference type="InterPro" id="IPR004605">
    <property type="entry name" value="DNA_helicase_Holl-junc_RuvB"/>
</dbReference>
<dbReference type="InterPro" id="IPR027417">
    <property type="entry name" value="P-loop_NTPase"/>
</dbReference>
<dbReference type="InterPro" id="IPR008824">
    <property type="entry name" value="RuvB-like_N"/>
</dbReference>
<dbReference type="InterPro" id="IPR008823">
    <property type="entry name" value="RuvB_C"/>
</dbReference>
<dbReference type="InterPro" id="IPR036388">
    <property type="entry name" value="WH-like_DNA-bd_sf"/>
</dbReference>
<dbReference type="InterPro" id="IPR036390">
    <property type="entry name" value="WH_DNA-bd_sf"/>
</dbReference>
<dbReference type="NCBIfam" id="NF000868">
    <property type="entry name" value="PRK00080.1"/>
    <property type="match status" value="1"/>
</dbReference>
<dbReference type="NCBIfam" id="TIGR00635">
    <property type="entry name" value="ruvB"/>
    <property type="match status" value="1"/>
</dbReference>
<dbReference type="PANTHER" id="PTHR42848">
    <property type="match status" value="1"/>
</dbReference>
<dbReference type="PANTHER" id="PTHR42848:SF1">
    <property type="entry name" value="HOLLIDAY JUNCTION BRANCH MIGRATION COMPLEX SUBUNIT RUVB"/>
    <property type="match status" value="1"/>
</dbReference>
<dbReference type="Pfam" id="PF17864">
    <property type="entry name" value="AAA_lid_4"/>
    <property type="match status" value="1"/>
</dbReference>
<dbReference type="Pfam" id="PF05491">
    <property type="entry name" value="RuvB_C"/>
    <property type="match status" value="1"/>
</dbReference>
<dbReference type="Pfam" id="PF05496">
    <property type="entry name" value="RuvB_N"/>
    <property type="match status" value="1"/>
</dbReference>
<dbReference type="SMART" id="SM00382">
    <property type="entry name" value="AAA"/>
    <property type="match status" value="1"/>
</dbReference>
<dbReference type="SUPFAM" id="SSF52540">
    <property type="entry name" value="P-loop containing nucleoside triphosphate hydrolases"/>
    <property type="match status" value="1"/>
</dbReference>
<dbReference type="SUPFAM" id="SSF46785">
    <property type="entry name" value="Winged helix' DNA-binding domain"/>
    <property type="match status" value="1"/>
</dbReference>
<organism>
    <name type="scientific">Campylobacter concisus (strain 13826)</name>
    <dbReference type="NCBI Taxonomy" id="360104"/>
    <lineage>
        <taxon>Bacteria</taxon>
        <taxon>Pseudomonadati</taxon>
        <taxon>Campylobacterota</taxon>
        <taxon>Epsilonproteobacteria</taxon>
        <taxon>Campylobacterales</taxon>
        <taxon>Campylobacteraceae</taxon>
        <taxon>Campylobacter</taxon>
    </lineage>
</organism>
<sequence>MDRIVEIEKVSFENDFEVSLRPSKFEDYIGQEKIKQNLDVFIKAAKKRNECLDHVLFYGPPGLGKTTLAHIIANEMGVSIKMTAAPMIEKSGDLAAILTNLQEGDVLFIDEIHRLSPAIEEVLYPAMEDFRLDIIIGSGPAAQTIKIDLPKFTLIGATTRAGMISAPLRDRFGMDFRLQFYTSSELSRIVQIASAKLGKECDKNASLEIAKRSRATPRIALRLLKRIRDFAEVNDEQIISHERAKEGLNALGVNSLGFDEMDIRYLEILMQARRRPMGLSTIAAALSEDEGTVEDVIEPYLLANGFIERTAKGRIASAKCFETFNVKIDIEKGLFE</sequence>
<accession>A7ZEM1</accession>
<keyword id="KW-0067">ATP-binding</keyword>
<keyword id="KW-0963">Cytoplasm</keyword>
<keyword id="KW-0227">DNA damage</keyword>
<keyword id="KW-0233">DNA recombination</keyword>
<keyword id="KW-0234">DNA repair</keyword>
<keyword id="KW-0238">DNA-binding</keyword>
<keyword id="KW-0378">Hydrolase</keyword>
<keyword id="KW-0547">Nucleotide-binding</keyword>